<evidence type="ECO:0000250" key="1">
    <source>
        <dbReference type="UniProtKB" id="A1DN30"/>
    </source>
</evidence>
<evidence type="ECO:0000250" key="2">
    <source>
        <dbReference type="UniProtKB" id="A2PZA5"/>
    </source>
</evidence>
<evidence type="ECO:0000250" key="3">
    <source>
        <dbReference type="UniProtKB" id="B6HFX8"/>
    </source>
</evidence>
<evidence type="ECO:0000250" key="4">
    <source>
        <dbReference type="UniProtKB" id="P9WEV7"/>
    </source>
</evidence>
<evidence type="ECO:0000250" key="5">
    <source>
        <dbReference type="UniProtKB" id="Q12051"/>
    </source>
</evidence>
<evidence type="ECO:0000250" key="6">
    <source>
        <dbReference type="UniProtKB" id="Q40577"/>
    </source>
</evidence>
<evidence type="ECO:0000256" key="7">
    <source>
        <dbReference type="SAM" id="MobiDB-lite"/>
    </source>
</evidence>
<evidence type="ECO:0000269" key="8">
    <source>
    </source>
</evidence>
<evidence type="ECO:0000303" key="9">
    <source>
    </source>
</evidence>
<evidence type="ECO:0000305" key="10"/>
<organism>
    <name type="scientific">Penicillium roqueforti (strain FM164)</name>
    <dbReference type="NCBI Taxonomy" id="1365484"/>
    <lineage>
        <taxon>Eukaryota</taxon>
        <taxon>Fungi</taxon>
        <taxon>Dikarya</taxon>
        <taxon>Ascomycota</taxon>
        <taxon>Pezizomycotina</taxon>
        <taxon>Eurotiomycetes</taxon>
        <taxon>Eurotiomycetidae</taxon>
        <taxon>Eurotiales</taxon>
        <taxon>Aspergillaceae</taxon>
        <taxon>Penicillium</taxon>
    </lineage>
</organism>
<keyword id="KW-0414">Isoprene biosynthesis</keyword>
<keyword id="KW-0456">Lyase</keyword>
<keyword id="KW-0460">Magnesium</keyword>
<keyword id="KW-0479">Metal-binding</keyword>
<keyword id="KW-0511">Multifunctional enzyme</keyword>
<keyword id="KW-1185">Reference proteome</keyword>
<keyword id="KW-0677">Repeat</keyword>
<keyword id="KW-0808">Transferase</keyword>
<accession>W6QAE7</accession>
<comment type="function">
    <text evidence="8">Bifunctional terpene synthase; part of the gene cluster that mediates the biosynthesis of conidiogenone, a diterpene known to induce the conidiation (PubMed:30343633). The bifunctional terpene synthase PrDS converts isopentenyl diphosphate (IPP) and dimethylallyl diphosphate (DMAPP) into deoxyconidiogenol (PubMed:30343633). The C-terminal prenyltransferase (PT) domain of PrDS catalyzes formation of GGPP, whereas the N-terminal terpene cyclase (TC) domain catalyzes the cyclization of GGPP into deoxyconidiogenol (PubMed:30343633). The cytochrome P450 monooxygenase PrP450 then catalyzes two rounds of oxidation to furnish conidiogenone (PubMed:30343633).</text>
</comment>
<comment type="catalytic activity">
    <reaction evidence="8">
        <text>isopentenyl diphosphate + (2E,6E)-farnesyl diphosphate = (2E,6E,10E)-geranylgeranyl diphosphate + diphosphate</text>
        <dbReference type="Rhea" id="RHEA:17653"/>
        <dbReference type="ChEBI" id="CHEBI:33019"/>
        <dbReference type="ChEBI" id="CHEBI:58756"/>
        <dbReference type="ChEBI" id="CHEBI:128769"/>
        <dbReference type="ChEBI" id="CHEBI:175763"/>
        <dbReference type="EC" id="2.5.1.29"/>
    </reaction>
    <physiologicalReaction direction="left-to-right" evidence="8">
        <dbReference type="Rhea" id="RHEA:17654"/>
    </physiologicalReaction>
</comment>
<comment type="cofactor">
    <cofactor evidence="4">
        <name>Mg(2+)</name>
        <dbReference type="ChEBI" id="CHEBI:18420"/>
    </cofactor>
</comment>
<comment type="pathway">
    <text evidence="8">Secondary metabolite biosynthesis; terpenoid biosynthesis.</text>
</comment>
<comment type="subunit">
    <text evidence="2">Hexamer.</text>
</comment>
<comment type="domain">
    <text evidence="1">The conserved DDXXD motifs as well as the NSE/DTE motif are important for the catalytic activity, presumably through binding to Mg(2+).</text>
</comment>
<comment type="similarity">
    <text evidence="10">In the N-terminal section; belongs to the terpene synthase family.</text>
</comment>
<comment type="similarity">
    <text evidence="10">In the C-terminal section; belongs to the FPP/GGPP synthase family.</text>
</comment>
<gene>
    <name evidence="9" type="primary">PrDS</name>
    <name type="ORF">PROQFM164_S02g003147</name>
</gene>
<sequence>MGETIADVYAESIDPEIYANNPAYSSLFTPYIHKQTIIADHVSVQCHIDLNGIDAVGSKFGNLNAHAGNFTSLCAPNCLPERLALVAYTVEYAFLHDDETDNAADQEALLLENKMLHQAINQSSMTSVSNRVSAKAQRKSEVQAKIAAEYLRLDPVFGEFFLKAWQTFTASVQDVRSLEFPSLDDYLEFRIVDAAADWTLYNFRWGSGITLTPEEEKIADPMSYVAYAELCLVNDLFSWDKEYDAHVKSNGEVPLVNAVHIVAVTQGLTHCAAKAVVQAEIRAHEERFCYLKEQYKATASPSDSILSWLKLLEHSMAGNWVWSLCVPRYFKVERNPYKDHLEKFGSEAVRVLTPEEHLRDSKQEINGTKEIELQEPKSNNTAESDVLAKYTSGYPTIDEPVLNPYTYINSLPSKNVRQTMIAALNSWYKVPVKSLLIIEGAVNFLHNSSLLLDDIQDGSVLRRGRPVAHQIFGVGQTINTATYLMNEALYLVQMLSPSAVLVYTDEMRNLQLGQGRDLHWSYHTHVPTPAQYISMVDGKTGGLFRLISRLMRSEATVNRDLDISQFATLLGRHFQIRDDYQNLQSDDYTKNKGFCDDLDEGKLSFPIILSMQSPGFSNTALSSVFKGSQKGETLSPEMKQYILEEITARGAFSQTKAVLRKLHIELLRLLMETEQKAGGIENWALRLLIMKLDLGDEKKKEAHKSDSAWKVNQRRAWKGSQKNGRPIDKACFLRAMEEASQK</sequence>
<dbReference type="EC" id="4.2.3.-" evidence="8"/>
<dbReference type="EC" id="2.5.1.29" evidence="8"/>
<dbReference type="EMBL" id="HG792016">
    <property type="protein sequence ID" value="CDM32996.1"/>
    <property type="molecule type" value="Genomic_DNA"/>
</dbReference>
<dbReference type="SMR" id="W6QAE7"/>
<dbReference type="STRING" id="1365484.W6QAE7"/>
<dbReference type="OMA" id="HITHYIG"/>
<dbReference type="OrthoDB" id="6921389at2759"/>
<dbReference type="UniPathway" id="UPA00213"/>
<dbReference type="Proteomes" id="UP000030686">
    <property type="component" value="Unassembled WGS sequence"/>
</dbReference>
<dbReference type="GO" id="GO:0046872">
    <property type="term" value="F:metal ion binding"/>
    <property type="evidence" value="ECO:0007669"/>
    <property type="project" value="UniProtKB-KW"/>
</dbReference>
<dbReference type="GO" id="GO:0004659">
    <property type="term" value="F:prenyltransferase activity"/>
    <property type="evidence" value="ECO:0007669"/>
    <property type="project" value="InterPro"/>
</dbReference>
<dbReference type="GO" id="GO:0010333">
    <property type="term" value="F:terpene synthase activity"/>
    <property type="evidence" value="ECO:0000314"/>
    <property type="project" value="GO_Central"/>
</dbReference>
<dbReference type="GO" id="GO:0140879">
    <property type="term" value="P:conidiogenone biosynthetic process"/>
    <property type="evidence" value="ECO:0000314"/>
    <property type="project" value="GO_Central"/>
</dbReference>
<dbReference type="CDD" id="cd00685">
    <property type="entry name" value="Trans_IPPS_HT"/>
    <property type="match status" value="1"/>
</dbReference>
<dbReference type="Gene3D" id="1.10.600.10">
    <property type="entry name" value="Farnesyl Diphosphate Synthase"/>
    <property type="match status" value="2"/>
</dbReference>
<dbReference type="InterPro" id="IPR008949">
    <property type="entry name" value="Isoprenoid_synthase_dom_sf"/>
</dbReference>
<dbReference type="InterPro" id="IPR000092">
    <property type="entry name" value="Polyprenyl_synt"/>
</dbReference>
<dbReference type="InterPro" id="IPR033749">
    <property type="entry name" value="Polyprenyl_synt_CS"/>
</dbReference>
<dbReference type="PANTHER" id="PTHR12001">
    <property type="entry name" value="GERANYLGERANYL PYROPHOSPHATE SYNTHASE"/>
    <property type="match status" value="1"/>
</dbReference>
<dbReference type="PANTHER" id="PTHR12001:SF72">
    <property type="entry name" value="THIJ_PFPI FAMILY PROTEIN (AFU_ORTHOLOGUE AFUA_3G01210)-RELATED"/>
    <property type="match status" value="1"/>
</dbReference>
<dbReference type="Pfam" id="PF00348">
    <property type="entry name" value="polyprenyl_synt"/>
    <property type="match status" value="1"/>
</dbReference>
<dbReference type="Pfam" id="PF19086">
    <property type="entry name" value="Terpene_syn_C_2"/>
    <property type="match status" value="1"/>
</dbReference>
<dbReference type="SFLD" id="SFLDS00005">
    <property type="entry name" value="Isoprenoid_Synthase_Type_I"/>
    <property type="match status" value="1"/>
</dbReference>
<dbReference type="SUPFAM" id="SSF48576">
    <property type="entry name" value="Terpenoid synthases"/>
    <property type="match status" value="2"/>
</dbReference>
<dbReference type="PROSITE" id="PS00723">
    <property type="entry name" value="POLYPRENYL_SYNTHASE_1"/>
    <property type="match status" value="1"/>
</dbReference>
<dbReference type="PROSITE" id="PS00444">
    <property type="entry name" value="POLYPRENYL_SYNTHASE_2"/>
    <property type="match status" value="1"/>
</dbReference>
<feature type="chain" id="PRO_0000453705" description="Conidiogenone synthase">
    <location>
        <begin position="1"/>
        <end position="742"/>
    </location>
</feature>
<feature type="region of interest" description="Terpene cyclase" evidence="3">
    <location>
        <begin position="1"/>
        <end position="332"/>
    </location>
</feature>
<feature type="region of interest" description="Prenyltransferase" evidence="3">
    <location>
        <begin position="333"/>
        <end position="742"/>
    </location>
</feature>
<feature type="region of interest" description="Disordered" evidence="7">
    <location>
        <begin position="701"/>
        <end position="724"/>
    </location>
</feature>
<feature type="short sequence motif" description="DDXXD 1" evidence="1">
    <location>
        <begin position="97"/>
        <end position="101"/>
    </location>
</feature>
<feature type="short sequence motif" description="NSE/DTE" evidence="1">
    <location>
        <begin position="234"/>
        <end position="242"/>
    </location>
</feature>
<feature type="short sequence motif" description="DDXXD 2" evidence="1">
    <location>
        <begin position="453"/>
        <end position="457"/>
    </location>
</feature>
<feature type="binding site" evidence="6">
    <location>
        <position position="97"/>
    </location>
    <ligand>
        <name>Mg(2+)</name>
        <dbReference type="ChEBI" id="CHEBI:18420"/>
        <label>1</label>
    </ligand>
</feature>
<feature type="binding site" evidence="6">
    <location>
        <position position="97"/>
    </location>
    <ligand>
        <name>Mg(2+)</name>
        <dbReference type="ChEBI" id="CHEBI:18420"/>
        <label>2</label>
    </ligand>
</feature>
<feature type="binding site" evidence="2">
    <location>
        <position position="97"/>
    </location>
    <ligand>
        <name>substrate</name>
    </ligand>
</feature>
<feature type="binding site" evidence="2">
    <location>
        <begin position="190"/>
        <end position="193"/>
    </location>
    <ligand>
        <name>substrate</name>
    </ligand>
</feature>
<feature type="binding site" evidence="2">
    <location>
        <position position="234"/>
    </location>
    <ligand>
        <name>substrate</name>
    </ligand>
</feature>
<feature type="binding site" evidence="2">
    <location>
        <begin position="238"/>
        <end position="242"/>
    </location>
    <ligand>
        <name>substrate</name>
    </ligand>
</feature>
<feature type="binding site" evidence="2">
    <location>
        <begin position="328"/>
        <end position="329"/>
    </location>
    <ligand>
        <name>substrate</name>
    </ligand>
</feature>
<feature type="binding site" evidence="5">
    <location>
        <position position="414"/>
    </location>
    <ligand>
        <name>isopentenyl diphosphate</name>
        <dbReference type="ChEBI" id="CHEBI:128769"/>
    </ligand>
</feature>
<feature type="binding site" evidence="5">
    <location>
        <position position="417"/>
    </location>
    <ligand>
        <name>isopentenyl diphosphate</name>
        <dbReference type="ChEBI" id="CHEBI:128769"/>
    </ligand>
</feature>
<feature type="binding site" evidence="5">
    <location>
        <position position="446"/>
    </location>
    <ligand>
        <name>isopentenyl diphosphate</name>
        <dbReference type="ChEBI" id="CHEBI:128769"/>
    </ligand>
</feature>
<feature type="binding site" evidence="5">
    <location>
        <position position="453"/>
    </location>
    <ligand>
        <name>Mg(2+)</name>
        <dbReference type="ChEBI" id="CHEBI:18420"/>
        <label>3</label>
    </ligand>
</feature>
<feature type="binding site" evidence="5">
    <location>
        <position position="453"/>
    </location>
    <ligand>
        <name>Mg(2+)</name>
        <dbReference type="ChEBI" id="CHEBI:18420"/>
        <label>4</label>
    </ligand>
</feature>
<feature type="binding site" evidence="5">
    <location>
        <position position="457"/>
    </location>
    <ligand>
        <name>Mg(2+)</name>
        <dbReference type="ChEBI" id="CHEBI:18420"/>
        <label>3</label>
    </ligand>
</feature>
<feature type="binding site" evidence="5">
    <location>
        <position position="457"/>
    </location>
    <ligand>
        <name>Mg(2+)</name>
        <dbReference type="ChEBI" id="CHEBI:18420"/>
        <label>4</label>
    </ligand>
</feature>
<feature type="binding site" evidence="5">
    <location>
        <position position="462"/>
    </location>
    <ligand>
        <name>dimethylallyl diphosphate</name>
        <dbReference type="ChEBI" id="CHEBI:57623"/>
    </ligand>
</feature>
<feature type="binding site" evidence="5">
    <location>
        <position position="463"/>
    </location>
    <ligand>
        <name>isopentenyl diphosphate</name>
        <dbReference type="ChEBI" id="CHEBI:128769"/>
    </ligand>
</feature>
<feature type="binding site" evidence="5">
    <location>
        <position position="539"/>
    </location>
    <ligand>
        <name>dimethylallyl diphosphate</name>
        <dbReference type="ChEBI" id="CHEBI:57623"/>
    </ligand>
</feature>
<feature type="binding site" evidence="5">
    <location>
        <position position="540"/>
    </location>
    <ligand>
        <name>dimethylallyl diphosphate</name>
        <dbReference type="ChEBI" id="CHEBI:57623"/>
    </ligand>
</feature>
<feature type="binding site" evidence="5">
    <location>
        <position position="575"/>
    </location>
    <ligand>
        <name>dimethylallyl diphosphate</name>
        <dbReference type="ChEBI" id="CHEBI:57623"/>
    </ligand>
</feature>
<feature type="binding site" evidence="5">
    <location>
        <position position="582"/>
    </location>
    <ligand>
        <name>dimethylallyl diphosphate</name>
        <dbReference type="ChEBI" id="CHEBI:57623"/>
    </ligand>
</feature>
<feature type="binding site" evidence="5">
    <location>
        <position position="592"/>
    </location>
    <ligand>
        <name>dimethylallyl diphosphate</name>
        <dbReference type="ChEBI" id="CHEBI:57623"/>
    </ligand>
</feature>
<feature type="binding site" evidence="5">
    <location>
        <position position="602"/>
    </location>
    <ligand>
        <name>dimethylallyl diphosphate</name>
        <dbReference type="ChEBI" id="CHEBI:57623"/>
    </ligand>
</feature>
<protein>
    <recommendedName>
        <fullName evidence="9">Conidiogenone synthase</fullName>
    </recommendedName>
    <alternativeName>
        <fullName evidence="9">Bifunctional terpene synthase PrDS</fullName>
        <shortName evidence="9">BFTS PrDS</shortName>
    </alternativeName>
    <alternativeName>
        <fullName evidence="9">Conidiogenone biosynthesis cluster protein PrDS</fullName>
    </alternativeName>
    <alternativeName>
        <fullName evidence="9">Diterpene synthase PrDS</fullName>
        <shortName evidence="9">DS</shortName>
    </alternativeName>
    <domain>
        <recommendedName>
            <fullName evidence="9">Terpene cyclase</fullName>
            <ecNumber evidence="8">4.2.3.-</ecNumber>
        </recommendedName>
    </domain>
    <domain>
        <recommendedName>
            <fullName evidence="9">Geranylgeranyl diphosphate synthase</fullName>
            <shortName evidence="9">GGDP synthase</shortName>
            <shortName evidence="9">GGS</shortName>
            <ecNumber evidence="8">2.5.1.29</ecNumber>
        </recommendedName>
    </domain>
</protein>
<name>PRDS_PENRF</name>
<proteinExistence type="evidence at protein level"/>
<reference key="1">
    <citation type="journal article" date="2014" name="Nat. Commun.">
        <title>Multiple recent horizontal transfers of a large genomic region in cheese making fungi.</title>
        <authorList>
            <person name="Cheeseman K."/>
            <person name="Ropars J."/>
            <person name="Renault P."/>
            <person name="Dupont J."/>
            <person name="Gouzy J."/>
            <person name="Branca A."/>
            <person name="Abraham A.-L."/>
            <person name="Ceppi M."/>
            <person name="Conseiller E."/>
            <person name="Debuchy R."/>
            <person name="Malagnac F."/>
            <person name="Goarin A."/>
            <person name="Silar P."/>
            <person name="Lacoste S."/>
            <person name="Sallet E."/>
            <person name="Bensimon A."/>
            <person name="Giraud T."/>
            <person name="Brygoo Y."/>
        </authorList>
    </citation>
    <scope>NUCLEOTIDE SEQUENCE [LARGE SCALE GENOMIC DNA]</scope>
    <source>
        <strain>FM164</strain>
    </source>
</reference>
<reference key="2">
    <citation type="journal article" date="2019" name="Biosci. Biotechnol. Biochem.">
        <title>Biosynthetic study of conidiation-inducing factor conidiogenone: heterologous production and cyclization mechanism of a key bifunctional diterpene synthase.</title>
        <authorList>
            <person name="Shiina T."/>
            <person name="Nakagawa K."/>
            <person name="Fujisaki Y."/>
            <person name="Ozaki T."/>
            <person name="Liu C."/>
            <person name="Toyomasu T."/>
            <person name="Hashimoto M."/>
            <person name="Koshino H."/>
            <person name="Minami A."/>
            <person name="Kawaide H."/>
            <person name="Oikawa H."/>
        </authorList>
    </citation>
    <scope>FUNCTION</scope>
    <scope>CATALYTIC ACTIVITY</scope>
    <scope>PATHWAY</scope>
</reference>